<keyword id="KW-0067">ATP-binding</keyword>
<keyword id="KW-0963">Cytoplasm</keyword>
<keyword id="KW-0418">Kinase</keyword>
<keyword id="KW-0444">Lipid biosynthesis</keyword>
<keyword id="KW-0443">Lipid metabolism</keyword>
<keyword id="KW-0460">Magnesium</keyword>
<keyword id="KW-0479">Metal-binding</keyword>
<keyword id="KW-0547">Nucleotide-binding</keyword>
<keyword id="KW-0594">Phospholipid biosynthesis</keyword>
<keyword id="KW-1208">Phospholipid metabolism</keyword>
<keyword id="KW-0808">Transferase</keyword>
<organism>
    <name type="scientific">Enterobacter sp. (strain 638)</name>
    <dbReference type="NCBI Taxonomy" id="399742"/>
    <lineage>
        <taxon>Bacteria</taxon>
        <taxon>Pseudomonadati</taxon>
        <taxon>Pseudomonadota</taxon>
        <taxon>Gammaproteobacteria</taxon>
        <taxon>Enterobacterales</taxon>
        <taxon>Enterobacteriaceae</taxon>
        <taxon>Enterobacter</taxon>
    </lineage>
</organism>
<sequence length="299" mass="32012">MATYPESLLILNGKSAGNELLREAITELRDNGVIIHVRVTWEKGDAARYIEEACQLGVETVIAGGGDGTINEIATALIERDAAERPAMGILPLGTANDFATSAGIPESLEKALQLAIVGKAAAVDIAQVNDKTCFINMATGGFGTRITSETPEKLKAALGGVSYLIHGLMRMDMLKPDRCEINGENFHWQGDALVIGIGNGRQAGGGQQLCPDALINDGLLQLRIFTSDGLLPALFTTLTNPEESPNILDGQSEWFEIIAPHGMTFNLDGEPLSGEHFRISLLPRALNCRLPPDCPLLR</sequence>
<comment type="function">
    <text evidence="1">Probably phosphorylates lipids; the in vivo substrate is unknown.</text>
</comment>
<comment type="cofactor">
    <cofactor evidence="1">
        <name>Mg(2+)</name>
        <dbReference type="ChEBI" id="CHEBI:18420"/>
    </cofactor>
    <cofactor evidence="1">
        <name>Ca(2+)</name>
        <dbReference type="ChEBI" id="CHEBI:29108"/>
    </cofactor>
    <text evidence="1">Binds 1 Mg(2+) ion per subunit. Ca(2+) may be able to substitute.</text>
</comment>
<comment type="subcellular location">
    <subcellularLocation>
        <location evidence="1">Cytoplasm</location>
    </subcellularLocation>
</comment>
<comment type="similarity">
    <text evidence="1">Belongs to the diacylglycerol/lipid kinase family. YegS lipid kinase subfamily.</text>
</comment>
<protein>
    <recommendedName>
        <fullName evidence="1">Probable lipid kinase YegS-like</fullName>
        <ecNumber evidence="1">2.7.1.-</ecNumber>
    </recommendedName>
</protein>
<proteinExistence type="inferred from homology"/>
<evidence type="ECO:0000255" key="1">
    <source>
        <dbReference type="HAMAP-Rule" id="MF_01377"/>
    </source>
</evidence>
<reference key="1">
    <citation type="journal article" date="2010" name="PLoS Genet.">
        <title>Genome sequence of the plant growth promoting endophytic bacterium Enterobacter sp. 638.</title>
        <authorList>
            <person name="Taghavi S."/>
            <person name="van der Lelie D."/>
            <person name="Hoffman A."/>
            <person name="Zhang Y.B."/>
            <person name="Walla M.D."/>
            <person name="Vangronsveld J."/>
            <person name="Newman L."/>
            <person name="Monchy S."/>
        </authorList>
    </citation>
    <scope>NUCLEOTIDE SEQUENCE [LARGE SCALE GENOMIC DNA]</scope>
    <source>
        <strain>638</strain>
    </source>
</reference>
<name>YEGS_ENT38</name>
<feature type="chain" id="PRO_1000068253" description="Probable lipid kinase YegS-like">
    <location>
        <begin position="1"/>
        <end position="299"/>
    </location>
</feature>
<feature type="domain" description="DAGKc" evidence="1">
    <location>
        <begin position="2"/>
        <end position="133"/>
    </location>
</feature>
<feature type="active site" description="Proton acceptor" evidence="1">
    <location>
        <position position="271"/>
    </location>
</feature>
<feature type="binding site" evidence="1">
    <location>
        <position position="40"/>
    </location>
    <ligand>
        <name>ATP</name>
        <dbReference type="ChEBI" id="CHEBI:30616"/>
    </ligand>
</feature>
<feature type="binding site" evidence="1">
    <location>
        <begin position="66"/>
        <end position="72"/>
    </location>
    <ligand>
        <name>ATP</name>
        <dbReference type="ChEBI" id="CHEBI:30616"/>
    </ligand>
</feature>
<feature type="binding site" evidence="1">
    <location>
        <position position="95"/>
    </location>
    <ligand>
        <name>ATP</name>
        <dbReference type="ChEBI" id="CHEBI:30616"/>
    </ligand>
</feature>
<feature type="binding site" evidence="1">
    <location>
        <position position="215"/>
    </location>
    <ligand>
        <name>Mg(2+)</name>
        <dbReference type="ChEBI" id="CHEBI:18420"/>
    </ligand>
</feature>
<feature type="binding site" evidence="1">
    <location>
        <position position="218"/>
    </location>
    <ligand>
        <name>Mg(2+)</name>
        <dbReference type="ChEBI" id="CHEBI:18420"/>
    </ligand>
</feature>
<feature type="binding site" evidence="1">
    <location>
        <position position="220"/>
    </location>
    <ligand>
        <name>Mg(2+)</name>
        <dbReference type="ChEBI" id="CHEBI:18420"/>
    </ligand>
</feature>
<gene>
    <name type="ordered locus">Ent638_2701</name>
</gene>
<accession>A4WCD7</accession>
<dbReference type="EC" id="2.7.1.-" evidence="1"/>
<dbReference type="EMBL" id="CP000653">
    <property type="protein sequence ID" value="ABP61367.1"/>
    <property type="molecule type" value="Genomic_DNA"/>
</dbReference>
<dbReference type="RefSeq" id="WP_015959700.1">
    <property type="nucleotide sequence ID" value="NC_009436.1"/>
</dbReference>
<dbReference type="SMR" id="A4WCD7"/>
<dbReference type="STRING" id="399742.Ent638_2701"/>
<dbReference type="KEGG" id="ent:Ent638_2701"/>
<dbReference type="eggNOG" id="COG1597">
    <property type="taxonomic scope" value="Bacteria"/>
</dbReference>
<dbReference type="HOGENOM" id="CLU_045532_1_1_6"/>
<dbReference type="OrthoDB" id="142078at2"/>
<dbReference type="Proteomes" id="UP000000230">
    <property type="component" value="Chromosome"/>
</dbReference>
<dbReference type="GO" id="GO:0005737">
    <property type="term" value="C:cytoplasm"/>
    <property type="evidence" value="ECO:0007669"/>
    <property type="project" value="UniProtKB-SubCell"/>
</dbReference>
<dbReference type="GO" id="GO:0005886">
    <property type="term" value="C:plasma membrane"/>
    <property type="evidence" value="ECO:0007669"/>
    <property type="project" value="TreeGrafter"/>
</dbReference>
<dbReference type="GO" id="GO:0005524">
    <property type="term" value="F:ATP binding"/>
    <property type="evidence" value="ECO:0007669"/>
    <property type="project" value="UniProtKB-UniRule"/>
</dbReference>
<dbReference type="GO" id="GO:0001727">
    <property type="term" value="F:lipid kinase activity"/>
    <property type="evidence" value="ECO:0007669"/>
    <property type="project" value="UniProtKB-UniRule"/>
</dbReference>
<dbReference type="GO" id="GO:0000287">
    <property type="term" value="F:magnesium ion binding"/>
    <property type="evidence" value="ECO:0007669"/>
    <property type="project" value="UniProtKB-UniRule"/>
</dbReference>
<dbReference type="GO" id="GO:0008654">
    <property type="term" value="P:phospholipid biosynthetic process"/>
    <property type="evidence" value="ECO:0007669"/>
    <property type="project" value="UniProtKB-UniRule"/>
</dbReference>
<dbReference type="Gene3D" id="2.60.200.40">
    <property type="match status" value="1"/>
</dbReference>
<dbReference type="Gene3D" id="3.40.50.10330">
    <property type="entry name" value="Probable inorganic polyphosphate/atp-NAD kinase, domain 1"/>
    <property type="match status" value="1"/>
</dbReference>
<dbReference type="HAMAP" id="MF_01377">
    <property type="entry name" value="YegS"/>
    <property type="match status" value="1"/>
</dbReference>
<dbReference type="InterPro" id="IPR017438">
    <property type="entry name" value="ATP-NAD_kinase_N"/>
</dbReference>
<dbReference type="InterPro" id="IPR005218">
    <property type="entry name" value="Diacylglycerol/lipid_kinase"/>
</dbReference>
<dbReference type="InterPro" id="IPR001206">
    <property type="entry name" value="Diacylglycerol_kinase_cat_dom"/>
</dbReference>
<dbReference type="InterPro" id="IPR022433">
    <property type="entry name" value="Lip_kinase_YegS"/>
</dbReference>
<dbReference type="InterPro" id="IPR050187">
    <property type="entry name" value="Lipid_Phosphate_FormReg"/>
</dbReference>
<dbReference type="InterPro" id="IPR016064">
    <property type="entry name" value="NAD/diacylglycerol_kinase_sf"/>
</dbReference>
<dbReference type="InterPro" id="IPR045540">
    <property type="entry name" value="YegS/DAGK_C"/>
</dbReference>
<dbReference type="NCBIfam" id="TIGR03702">
    <property type="entry name" value="lip_kinase_YegS"/>
    <property type="match status" value="1"/>
</dbReference>
<dbReference type="NCBIfam" id="NF009602">
    <property type="entry name" value="PRK13054.1"/>
    <property type="match status" value="1"/>
</dbReference>
<dbReference type="NCBIfam" id="TIGR00147">
    <property type="entry name" value="YegS/Rv2252/BmrU family lipid kinase"/>
    <property type="match status" value="1"/>
</dbReference>
<dbReference type="PANTHER" id="PTHR12358:SF106">
    <property type="entry name" value="LIPID KINASE YEGS"/>
    <property type="match status" value="1"/>
</dbReference>
<dbReference type="PANTHER" id="PTHR12358">
    <property type="entry name" value="SPHINGOSINE KINASE"/>
    <property type="match status" value="1"/>
</dbReference>
<dbReference type="Pfam" id="PF00781">
    <property type="entry name" value="DAGK_cat"/>
    <property type="match status" value="1"/>
</dbReference>
<dbReference type="Pfam" id="PF19279">
    <property type="entry name" value="YegS_C"/>
    <property type="match status" value="1"/>
</dbReference>
<dbReference type="SMART" id="SM00046">
    <property type="entry name" value="DAGKc"/>
    <property type="match status" value="1"/>
</dbReference>
<dbReference type="SUPFAM" id="SSF111331">
    <property type="entry name" value="NAD kinase/diacylglycerol kinase-like"/>
    <property type="match status" value="1"/>
</dbReference>
<dbReference type="PROSITE" id="PS50146">
    <property type="entry name" value="DAGK"/>
    <property type="match status" value="1"/>
</dbReference>